<keyword id="KW-1003">Cell membrane</keyword>
<keyword id="KW-0325">Glycoprotein</keyword>
<keyword id="KW-0472">Membrane</keyword>
<keyword id="KW-1185">Reference proteome</keyword>
<keyword id="KW-0812">Transmembrane</keyword>
<keyword id="KW-1133">Transmembrane helix</keyword>
<organism>
    <name type="scientific">Mus musculus</name>
    <name type="common">Mouse</name>
    <dbReference type="NCBI Taxonomy" id="10090"/>
    <lineage>
        <taxon>Eukaryota</taxon>
        <taxon>Metazoa</taxon>
        <taxon>Chordata</taxon>
        <taxon>Craniata</taxon>
        <taxon>Vertebrata</taxon>
        <taxon>Euteleostomi</taxon>
        <taxon>Mammalia</taxon>
        <taxon>Eutheria</taxon>
        <taxon>Euarchontoglires</taxon>
        <taxon>Glires</taxon>
        <taxon>Rodentia</taxon>
        <taxon>Myomorpha</taxon>
        <taxon>Muroidea</taxon>
        <taxon>Muridae</taxon>
        <taxon>Murinae</taxon>
        <taxon>Mus</taxon>
        <taxon>Mus</taxon>
    </lineage>
</organism>
<proteinExistence type="evidence at transcript level"/>
<comment type="subcellular location">
    <subcellularLocation>
        <location evidence="1">Cell membrane</location>
        <topology evidence="1">Multi-pass membrane protein</topology>
    </subcellularLocation>
</comment>
<comment type="sequence caution" evidence="3">
    <conflict type="frameshift">
        <sequence resource="EMBL-CDS" id="BAC27447"/>
    </conflict>
</comment>
<protein>
    <recommendedName>
        <fullName evidence="4">Transmembrane protein 180</fullName>
    </recommendedName>
    <alternativeName>
        <fullName evidence="1">Major facilitator superfamily domain-containing 13A</fullName>
    </alternativeName>
</protein>
<dbReference type="EMBL" id="AK031554">
    <property type="protein sequence ID" value="BAC27447.1"/>
    <property type="status" value="ALT_FRAME"/>
    <property type="molecule type" value="mRNA"/>
</dbReference>
<dbReference type="EMBL" id="AK151797">
    <property type="protein sequence ID" value="BAE30697.1"/>
    <property type="molecule type" value="mRNA"/>
</dbReference>
<dbReference type="EMBL" id="AK161305">
    <property type="protein sequence ID" value="BAE36310.1"/>
    <property type="molecule type" value="mRNA"/>
</dbReference>
<dbReference type="EMBL" id="AK170247">
    <property type="protein sequence ID" value="BAE41659.1"/>
    <property type="molecule type" value="mRNA"/>
</dbReference>
<dbReference type="EMBL" id="BC049142">
    <property type="protein sequence ID" value="AAH49142.1"/>
    <property type="molecule type" value="mRNA"/>
</dbReference>
<dbReference type="EMBL" id="BC058746">
    <property type="protein sequence ID" value="AAH58746.1"/>
    <property type="molecule type" value="mRNA"/>
</dbReference>
<dbReference type="CCDS" id="CCDS29877.1"/>
<dbReference type="RefSeq" id="NP_083462.2">
    <property type="nucleotide sequence ID" value="NM_029186.2"/>
</dbReference>
<dbReference type="SMR" id="Q6PDE8"/>
<dbReference type="FunCoup" id="Q6PDE8">
    <property type="interactions" value="7"/>
</dbReference>
<dbReference type="STRING" id="10090.ENSMUSP00000084189"/>
<dbReference type="GlyCosmos" id="Q6PDE8">
    <property type="glycosylation" value="1 site, No reported glycans"/>
</dbReference>
<dbReference type="GlyGen" id="Q6PDE8">
    <property type="glycosylation" value="2 sites"/>
</dbReference>
<dbReference type="PhosphoSitePlus" id="Q6PDE8"/>
<dbReference type="PaxDb" id="10090-ENSMUSP00000084189"/>
<dbReference type="Antibodypedia" id="18048">
    <property type="antibodies" value="35 antibodies from 13 providers"/>
</dbReference>
<dbReference type="Ensembl" id="ENSMUST00000086969.13">
    <property type="protein sequence ID" value="ENSMUSP00000084189.7"/>
    <property type="gene ID" value="ENSMUSG00000025227.15"/>
</dbReference>
<dbReference type="Ensembl" id="ENSMUST00000128041.8">
    <property type="protein sequence ID" value="ENSMUSP00000119072.2"/>
    <property type="gene ID" value="ENSMUSG00000025227.15"/>
</dbReference>
<dbReference type="GeneID" id="75146"/>
<dbReference type="KEGG" id="mmu:75146"/>
<dbReference type="UCSC" id="uc008htk.1">
    <property type="organism name" value="mouse"/>
</dbReference>
<dbReference type="AGR" id="MGI:1922396"/>
<dbReference type="CTD" id="79847"/>
<dbReference type="MGI" id="MGI:1922396">
    <property type="gene designation" value="Mfsd13a"/>
</dbReference>
<dbReference type="VEuPathDB" id="HostDB:ENSMUSG00000025227"/>
<dbReference type="eggNOG" id="ENOG502QSW5">
    <property type="taxonomic scope" value="Eukaryota"/>
</dbReference>
<dbReference type="GeneTree" id="ENSGT00940000160317"/>
<dbReference type="HOGENOM" id="CLU_034985_0_0_1"/>
<dbReference type="InParanoid" id="Q6PDE8"/>
<dbReference type="OMA" id="WNSVNDP"/>
<dbReference type="OrthoDB" id="62987at2759"/>
<dbReference type="PhylomeDB" id="Q6PDE8"/>
<dbReference type="TreeFam" id="TF313122"/>
<dbReference type="BioGRID-ORCS" id="75146">
    <property type="hits" value="2 hits in 77 CRISPR screens"/>
</dbReference>
<dbReference type="ChiTaRS" id="Mfsd13a">
    <property type="organism name" value="mouse"/>
</dbReference>
<dbReference type="PRO" id="PR:Q6PDE8"/>
<dbReference type="Proteomes" id="UP000000589">
    <property type="component" value="Chromosome 19"/>
</dbReference>
<dbReference type="RNAct" id="Q6PDE8">
    <property type="molecule type" value="protein"/>
</dbReference>
<dbReference type="Bgee" id="ENSMUSG00000025227">
    <property type="expression patterns" value="Expressed in olfactory tubercle and 229 other cell types or tissues"/>
</dbReference>
<dbReference type="ExpressionAtlas" id="Q6PDE8">
    <property type="expression patterns" value="baseline and differential"/>
</dbReference>
<dbReference type="GO" id="GO:0005886">
    <property type="term" value="C:plasma membrane"/>
    <property type="evidence" value="ECO:0000250"/>
    <property type="project" value="UniProtKB"/>
</dbReference>
<dbReference type="CDD" id="cd17481">
    <property type="entry name" value="MFS_MFSD13A"/>
    <property type="match status" value="1"/>
</dbReference>
<dbReference type="InterPro" id="IPR036259">
    <property type="entry name" value="MFS_trans_sf"/>
</dbReference>
<dbReference type="InterPro" id="IPR040035">
    <property type="entry name" value="TMEM180"/>
</dbReference>
<dbReference type="PANTHER" id="PTHR28658">
    <property type="entry name" value="TRANSMEMBRANE PROTEIN 180"/>
    <property type="match status" value="1"/>
</dbReference>
<dbReference type="PANTHER" id="PTHR28658:SF3">
    <property type="entry name" value="TRANSMEMBRANE PROTEIN 180"/>
    <property type="match status" value="1"/>
</dbReference>
<dbReference type="Pfam" id="PF13347">
    <property type="entry name" value="MFS_2"/>
    <property type="match status" value="2"/>
</dbReference>
<dbReference type="SUPFAM" id="SSF103473">
    <property type="entry name" value="MFS general substrate transporter"/>
    <property type="match status" value="1"/>
</dbReference>
<evidence type="ECO:0000250" key="1">
    <source>
        <dbReference type="UniProtKB" id="Q14CX5"/>
    </source>
</evidence>
<evidence type="ECO:0000255" key="2"/>
<evidence type="ECO:0000305" key="3"/>
<evidence type="ECO:0000312" key="4">
    <source>
        <dbReference type="MGI" id="MGI:1922396"/>
    </source>
</evidence>
<feature type="chain" id="PRO_0000256225" description="Transmembrane protein 180">
    <location>
        <begin position="1"/>
        <end position="519"/>
    </location>
</feature>
<feature type="topological domain" description="Extracellular" evidence="3">
    <location>
        <begin position="1"/>
        <end position="11"/>
    </location>
</feature>
<feature type="transmembrane region" description="Helical" evidence="1">
    <location>
        <begin position="12"/>
        <end position="43"/>
    </location>
</feature>
<feature type="topological domain" description="Cytoplasmic" evidence="3">
    <location>
        <begin position="44"/>
        <end position="55"/>
    </location>
</feature>
<feature type="transmembrane region" description="Helical" evidence="1">
    <location>
        <begin position="56"/>
        <end position="74"/>
    </location>
</feature>
<feature type="topological domain" description="Extracellular" evidence="3">
    <location>
        <begin position="75"/>
        <end position="100"/>
    </location>
</feature>
<feature type="transmembrane region" description="Helical" evidence="1">
    <location>
        <begin position="101"/>
        <end position="118"/>
    </location>
</feature>
<feature type="topological domain" description="Cytoplasmic" evidence="3">
    <location>
        <begin position="119"/>
        <end position="126"/>
    </location>
</feature>
<feature type="transmembrane region" description="Helical" evidence="1">
    <location>
        <begin position="127"/>
        <end position="151"/>
    </location>
</feature>
<feature type="topological domain" description="Extracellular" evidence="3">
    <location>
        <begin position="152"/>
        <end position="155"/>
    </location>
</feature>
<feature type="transmembrane region" description="Helical" evidence="1">
    <location>
        <begin position="156"/>
        <end position="179"/>
    </location>
</feature>
<feature type="topological domain" description="Cytoplasmic" evidence="3">
    <location>
        <begin position="180"/>
        <end position="191"/>
    </location>
</feature>
<feature type="transmembrane region" description="Helical" evidence="1">
    <location>
        <begin position="192"/>
        <end position="223"/>
    </location>
</feature>
<feature type="topological domain" description="Extracellular" evidence="3">
    <location>
        <begin position="224"/>
        <end position="264"/>
    </location>
</feature>
<feature type="transmembrane region" description="Helical" evidence="1">
    <location>
        <begin position="265"/>
        <end position="292"/>
    </location>
</feature>
<feature type="topological domain" description="Cytoplasmic" evidence="3">
    <location>
        <begin position="293"/>
        <end position="305"/>
    </location>
</feature>
<feature type="transmembrane region" description="Helical" evidence="1">
    <location>
        <begin position="306"/>
        <end position="325"/>
    </location>
</feature>
<feature type="topological domain" description="Extracellular" evidence="3">
    <location>
        <begin position="326"/>
        <end position="330"/>
    </location>
</feature>
<feature type="transmembrane region" description="Helical" evidence="1">
    <location>
        <begin position="331"/>
        <end position="350"/>
    </location>
</feature>
<feature type="topological domain" description="Cytoplasmic" evidence="3">
    <location>
        <begin position="351"/>
        <end position="358"/>
    </location>
</feature>
<feature type="transmembrane region" description="Helical" evidence="1">
    <location>
        <begin position="359"/>
        <end position="393"/>
    </location>
</feature>
<feature type="topological domain" description="Extracellular" evidence="3">
    <location>
        <begin position="394"/>
        <end position="402"/>
    </location>
</feature>
<feature type="transmembrane region" description="Helical" evidence="1">
    <location>
        <begin position="403"/>
        <end position="429"/>
    </location>
</feature>
<feature type="topological domain" description="Cytoplasmic" evidence="3">
    <location>
        <begin position="430"/>
        <end position="468"/>
    </location>
</feature>
<feature type="transmembrane region" description="Helical" evidence="1">
    <location>
        <begin position="469"/>
        <end position="487"/>
    </location>
</feature>
<feature type="topological domain" description="Extracellular" evidence="3">
    <location>
        <begin position="488"/>
        <end position="519"/>
    </location>
</feature>
<feature type="glycosylation site" description="N-linked (GlcNAc...) asparagine" evidence="2">
    <location>
        <position position="250"/>
    </location>
</feature>
<accession>Q6PDE8</accession>
<accession>Q80Y49</accession>
<accession>Q8CD35</accession>
<reference key="1">
    <citation type="journal article" date="2005" name="Science">
        <title>The transcriptional landscape of the mammalian genome.</title>
        <authorList>
            <person name="Carninci P."/>
            <person name="Kasukawa T."/>
            <person name="Katayama S."/>
            <person name="Gough J."/>
            <person name="Frith M.C."/>
            <person name="Maeda N."/>
            <person name="Oyama R."/>
            <person name="Ravasi T."/>
            <person name="Lenhard B."/>
            <person name="Wells C."/>
            <person name="Kodzius R."/>
            <person name="Shimokawa K."/>
            <person name="Bajic V.B."/>
            <person name="Brenner S.E."/>
            <person name="Batalov S."/>
            <person name="Forrest A.R."/>
            <person name="Zavolan M."/>
            <person name="Davis M.J."/>
            <person name="Wilming L.G."/>
            <person name="Aidinis V."/>
            <person name="Allen J.E."/>
            <person name="Ambesi-Impiombato A."/>
            <person name="Apweiler R."/>
            <person name="Aturaliya R.N."/>
            <person name="Bailey T.L."/>
            <person name="Bansal M."/>
            <person name="Baxter L."/>
            <person name="Beisel K.W."/>
            <person name="Bersano T."/>
            <person name="Bono H."/>
            <person name="Chalk A.M."/>
            <person name="Chiu K.P."/>
            <person name="Choudhary V."/>
            <person name="Christoffels A."/>
            <person name="Clutterbuck D.R."/>
            <person name="Crowe M.L."/>
            <person name="Dalla E."/>
            <person name="Dalrymple B.P."/>
            <person name="de Bono B."/>
            <person name="Della Gatta G."/>
            <person name="di Bernardo D."/>
            <person name="Down T."/>
            <person name="Engstrom P."/>
            <person name="Fagiolini M."/>
            <person name="Faulkner G."/>
            <person name="Fletcher C.F."/>
            <person name="Fukushima T."/>
            <person name="Furuno M."/>
            <person name="Futaki S."/>
            <person name="Gariboldi M."/>
            <person name="Georgii-Hemming P."/>
            <person name="Gingeras T.R."/>
            <person name="Gojobori T."/>
            <person name="Green R.E."/>
            <person name="Gustincich S."/>
            <person name="Harbers M."/>
            <person name="Hayashi Y."/>
            <person name="Hensch T.K."/>
            <person name="Hirokawa N."/>
            <person name="Hill D."/>
            <person name="Huminiecki L."/>
            <person name="Iacono M."/>
            <person name="Ikeo K."/>
            <person name="Iwama A."/>
            <person name="Ishikawa T."/>
            <person name="Jakt M."/>
            <person name="Kanapin A."/>
            <person name="Katoh M."/>
            <person name="Kawasawa Y."/>
            <person name="Kelso J."/>
            <person name="Kitamura H."/>
            <person name="Kitano H."/>
            <person name="Kollias G."/>
            <person name="Krishnan S.P."/>
            <person name="Kruger A."/>
            <person name="Kummerfeld S.K."/>
            <person name="Kurochkin I.V."/>
            <person name="Lareau L.F."/>
            <person name="Lazarevic D."/>
            <person name="Lipovich L."/>
            <person name="Liu J."/>
            <person name="Liuni S."/>
            <person name="McWilliam S."/>
            <person name="Madan Babu M."/>
            <person name="Madera M."/>
            <person name="Marchionni L."/>
            <person name="Matsuda H."/>
            <person name="Matsuzawa S."/>
            <person name="Miki H."/>
            <person name="Mignone F."/>
            <person name="Miyake S."/>
            <person name="Morris K."/>
            <person name="Mottagui-Tabar S."/>
            <person name="Mulder N."/>
            <person name="Nakano N."/>
            <person name="Nakauchi H."/>
            <person name="Ng P."/>
            <person name="Nilsson R."/>
            <person name="Nishiguchi S."/>
            <person name="Nishikawa S."/>
            <person name="Nori F."/>
            <person name="Ohara O."/>
            <person name="Okazaki Y."/>
            <person name="Orlando V."/>
            <person name="Pang K.C."/>
            <person name="Pavan W.J."/>
            <person name="Pavesi G."/>
            <person name="Pesole G."/>
            <person name="Petrovsky N."/>
            <person name="Piazza S."/>
            <person name="Reed J."/>
            <person name="Reid J.F."/>
            <person name="Ring B.Z."/>
            <person name="Ringwald M."/>
            <person name="Rost B."/>
            <person name="Ruan Y."/>
            <person name="Salzberg S.L."/>
            <person name="Sandelin A."/>
            <person name="Schneider C."/>
            <person name="Schoenbach C."/>
            <person name="Sekiguchi K."/>
            <person name="Semple C.A."/>
            <person name="Seno S."/>
            <person name="Sessa L."/>
            <person name="Sheng Y."/>
            <person name="Shibata Y."/>
            <person name="Shimada H."/>
            <person name="Shimada K."/>
            <person name="Silva D."/>
            <person name="Sinclair B."/>
            <person name="Sperling S."/>
            <person name="Stupka E."/>
            <person name="Sugiura K."/>
            <person name="Sultana R."/>
            <person name="Takenaka Y."/>
            <person name="Taki K."/>
            <person name="Tammoja K."/>
            <person name="Tan S.L."/>
            <person name="Tang S."/>
            <person name="Taylor M.S."/>
            <person name="Tegner J."/>
            <person name="Teichmann S.A."/>
            <person name="Ueda H.R."/>
            <person name="van Nimwegen E."/>
            <person name="Verardo R."/>
            <person name="Wei C.L."/>
            <person name="Yagi K."/>
            <person name="Yamanishi H."/>
            <person name="Zabarovsky E."/>
            <person name="Zhu S."/>
            <person name="Zimmer A."/>
            <person name="Hide W."/>
            <person name="Bult C."/>
            <person name="Grimmond S.M."/>
            <person name="Teasdale R.D."/>
            <person name="Liu E.T."/>
            <person name="Brusic V."/>
            <person name="Quackenbush J."/>
            <person name="Wahlestedt C."/>
            <person name="Mattick J.S."/>
            <person name="Hume D.A."/>
            <person name="Kai C."/>
            <person name="Sasaki D."/>
            <person name="Tomaru Y."/>
            <person name="Fukuda S."/>
            <person name="Kanamori-Katayama M."/>
            <person name="Suzuki M."/>
            <person name="Aoki J."/>
            <person name="Arakawa T."/>
            <person name="Iida J."/>
            <person name="Imamura K."/>
            <person name="Itoh M."/>
            <person name="Kato T."/>
            <person name="Kawaji H."/>
            <person name="Kawagashira N."/>
            <person name="Kawashima T."/>
            <person name="Kojima M."/>
            <person name="Kondo S."/>
            <person name="Konno H."/>
            <person name="Nakano K."/>
            <person name="Ninomiya N."/>
            <person name="Nishio T."/>
            <person name="Okada M."/>
            <person name="Plessy C."/>
            <person name="Shibata K."/>
            <person name="Shiraki T."/>
            <person name="Suzuki S."/>
            <person name="Tagami M."/>
            <person name="Waki K."/>
            <person name="Watahiki A."/>
            <person name="Okamura-Oho Y."/>
            <person name="Suzuki H."/>
            <person name="Kawai J."/>
            <person name="Hayashizaki Y."/>
        </authorList>
    </citation>
    <scope>NUCLEOTIDE SEQUENCE [LARGE SCALE MRNA]</scope>
    <source>
        <strain>C57BL/6J</strain>
        <strain>NOD</strain>
        <tissue>Bone marrow</tissue>
        <tissue>Testis</tissue>
    </source>
</reference>
<reference key="2">
    <citation type="journal article" date="2004" name="Genome Res.">
        <title>The status, quality, and expansion of the NIH full-length cDNA project: the Mammalian Gene Collection (MGC).</title>
        <authorList>
            <consortium name="The MGC Project Team"/>
        </authorList>
    </citation>
    <scope>NUCLEOTIDE SEQUENCE [LARGE SCALE MRNA]</scope>
    <source>
        <strain>FVB/N</strain>
        <tissue>Colon</tissue>
        <tissue>Olfactory epithelium</tissue>
    </source>
</reference>
<name>MF13A_MOUSE</name>
<gene>
    <name evidence="1" type="primary">Mfsd13a</name>
    <name evidence="4" type="synonym">Tmem180</name>
</gene>
<sequence length="519" mass="57898">MGLDWPQAWLLGLPIAVVYGSLALFTSILHNVFLLYYVDTFVSVYKINKVSFWVGETVFLLWNSFNDPLFGWLSDRQLLSSQPRSGAGLSSRDVVLTRVRALGWHGPLLALSFLAFWVPWAPAGLQFLLCLCLYDGFLTLVDLHHHALLADLALSSHDRTHLNFYCSLFSAAGSLSVFASYAFWNKEDFSSFRAFCVVLAAGSGLGFLGTTQLLKRQIEATRRDRGCPGLDLDGGVCEEEPPVGGEEAGNITLGQYLRQLARHQNFLWFVGMDLVQVFHCHFNSNFFPLFLEHLLSDHISLSTGSFLLGISYVAPHLNNLYFLPLCRRWGVYAVVRGLFLLKLSLSLLMLLAGPDHPGLLCFFIASNRVFTEGTCKLLTLVVTDLVDEDLVLNHRKQAASALLFGMVALVTKPGQTFAPLLGTWLLCFYTGHDLFQQSPMTPVGSVRPWPELPAPAPAPAQAPTLRQGCFYLLVFVPITCALLQLFTWSQFTLHGRRLRTVKAQRQNLAQIHTLNIKMV</sequence>